<comment type="catalytic activity">
    <reaction evidence="1">
        <text>tRNA(Arg) + L-arginine + ATP = L-arginyl-tRNA(Arg) + AMP + diphosphate</text>
        <dbReference type="Rhea" id="RHEA:20301"/>
        <dbReference type="Rhea" id="RHEA-COMP:9658"/>
        <dbReference type="Rhea" id="RHEA-COMP:9673"/>
        <dbReference type="ChEBI" id="CHEBI:30616"/>
        <dbReference type="ChEBI" id="CHEBI:32682"/>
        <dbReference type="ChEBI" id="CHEBI:33019"/>
        <dbReference type="ChEBI" id="CHEBI:78442"/>
        <dbReference type="ChEBI" id="CHEBI:78513"/>
        <dbReference type="ChEBI" id="CHEBI:456215"/>
        <dbReference type="EC" id="6.1.1.19"/>
    </reaction>
</comment>
<comment type="subunit">
    <text evidence="1">Monomer.</text>
</comment>
<comment type="subcellular location">
    <subcellularLocation>
        <location evidence="1">Cytoplasm</location>
    </subcellularLocation>
</comment>
<comment type="similarity">
    <text evidence="1">Belongs to the class-I aminoacyl-tRNA synthetase family.</text>
</comment>
<accession>Q9RRC4</accession>
<keyword id="KW-0030">Aminoacyl-tRNA synthetase</keyword>
<keyword id="KW-0067">ATP-binding</keyword>
<keyword id="KW-0963">Cytoplasm</keyword>
<keyword id="KW-0436">Ligase</keyword>
<keyword id="KW-0547">Nucleotide-binding</keyword>
<keyword id="KW-0648">Protein biosynthesis</keyword>
<keyword id="KW-1185">Reference proteome</keyword>
<reference key="1">
    <citation type="journal article" date="1999" name="Science">
        <title>Genome sequence of the radioresistant bacterium Deinococcus radiodurans R1.</title>
        <authorList>
            <person name="White O."/>
            <person name="Eisen J.A."/>
            <person name="Heidelberg J.F."/>
            <person name="Hickey E.K."/>
            <person name="Peterson J.D."/>
            <person name="Dodson R.J."/>
            <person name="Haft D.H."/>
            <person name="Gwinn M.L."/>
            <person name="Nelson W.C."/>
            <person name="Richardson D.L."/>
            <person name="Moffat K.S."/>
            <person name="Qin H."/>
            <person name="Jiang L."/>
            <person name="Pamphile W."/>
            <person name="Crosby M."/>
            <person name="Shen M."/>
            <person name="Vamathevan J.J."/>
            <person name="Lam P."/>
            <person name="McDonald L.A."/>
            <person name="Utterback T.R."/>
            <person name="Zalewski C."/>
            <person name="Makarova K.S."/>
            <person name="Aravind L."/>
            <person name="Daly M.J."/>
            <person name="Minton K.W."/>
            <person name="Fleischmann R.D."/>
            <person name="Ketchum K.A."/>
            <person name="Nelson K.E."/>
            <person name="Salzberg S.L."/>
            <person name="Smith H.O."/>
            <person name="Venter J.C."/>
            <person name="Fraser C.M."/>
        </authorList>
    </citation>
    <scope>NUCLEOTIDE SEQUENCE [LARGE SCALE GENOMIC DNA]</scope>
    <source>
        <strain>ATCC 13939 / DSM 20539 / JCM 16871 / CCUG 27074 / LMG 4051 / NBRC 15346 / NCIMB 9279 / VKM B-1422 / R1</strain>
    </source>
</reference>
<evidence type="ECO:0000255" key="1">
    <source>
        <dbReference type="HAMAP-Rule" id="MF_00123"/>
    </source>
</evidence>
<gene>
    <name evidence="1" type="primary">argS</name>
    <name type="ordered locus">DR_2568</name>
</gene>
<sequence>MDLKAQLKAAVEQAAHQMGMPVDAAIQETPANKPGDYGTPAAFQMAKAAGGNPAQIAAQLAQTVVLPAGIRRVEATGPFLNFFLDAGAFVRGVVERPFELPKREGKVVIEHTSVNPNKELHVGHLRNVVLGDSMARILRAAGHTVEVQNYIDDTGRQAAESLFATQHYGRVWDGVQKYDQWLGEGYVQLNADPQKPELESGIMEIMHKLEAGELRPLVEQTVKAQLQTCFRLGARYDLLNWESDVVGSGFLAQAMNILEGSRYTSRPTEGKYAGAFIMDVSEFMPGLEEPNVVLVRSGGTAMYAAKDIGYQFWKFGLFEGMKFKPFMQDPEGNTIWTSAPDGQPDDERRFGHAQEVINVIDSRQDHPQTVVRSALGVAGEQEKEERSIHLSYAFVTLEGQTISGRKGIAVSADDAMDEAQKRALSVLQGINPDLAAREDAAEIARRIGLGAIRFAMLKAEPTRKIDFRWEQALALNGDTAPYVQYAAVRAANILKKAEEAGYATDGTGADWDALPDIDLVLAKQIAKLPEVAAQAARIHSPHVVAQYALDLATSFNAWYNAKTKQGKPATNVLQSEEGLREARLALIVRLRKAFEDTLDLIGIEIPAAM</sequence>
<organism>
    <name type="scientific">Deinococcus radiodurans (strain ATCC 13939 / DSM 20539 / JCM 16871 / CCUG 27074 / LMG 4051 / NBRC 15346 / NCIMB 9279 / VKM B-1422 / R1)</name>
    <dbReference type="NCBI Taxonomy" id="243230"/>
    <lineage>
        <taxon>Bacteria</taxon>
        <taxon>Thermotogati</taxon>
        <taxon>Deinococcota</taxon>
        <taxon>Deinococci</taxon>
        <taxon>Deinococcales</taxon>
        <taxon>Deinococcaceae</taxon>
        <taxon>Deinococcus</taxon>
    </lineage>
</organism>
<proteinExistence type="inferred from homology"/>
<dbReference type="EC" id="6.1.1.19" evidence="1"/>
<dbReference type="EMBL" id="AE000513">
    <property type="protein sequence ID" value="AAF12109.1"/>
    <property type="molecule type" value="Genomic_DNA"/>
</dbReference>
<dbReference type="PIR" id="B75257">
    <property type="entry name" value="B75257"/>
</dbReference>
<dbReference type="RefSeq" id="NP_296288.1">
    <property type="nucleotide sequence ID" value="NC_001263.1"/>
</dbReference>
<dbReference type="RefSeq" id="WP_010889193.1">
    <property type="nucleotide sequence ID" value="NC_001263.1"/>
</dbReference>
<dbReference type="SMR" id="Q9RRC4"/>
<dbReference type="FunCoup" id="Q9RRC4">
    <property type="interactions" value="445"/>
</dbReference>
<dbReference type="STRING" id="243230.DR_2568"/>
<dbReference type="PaxDb" id="243230-DR_2568"/>
<dbReference type="EnsemblBacteria" id="AAF12109">
    <property type="protein sequence ID" value="AAF12109"/>
    <property type="gene ID" value="DR_2568"/>
</dbReference>
<dbReference type="GeneID" id="69518820"/>
<dbReference type="KEGG" id="dra:DR_2568"/>
<dbReference type="PATRIC" id="fig|243230.17.peg.2813"/>
<dbReference type="eggNOG" id="COG0018">
    <property type="taxonomic scope" value="Bacteria"/>
</dbReference>
<dbReference type="HOGENOM" id="CLU_006406_6_1_0"/>
<dbReference type="InParanoid" id="Q9RRC4"/>
<dbReference type="OrthoDB" id="9805987at2"/>
<dbReference type="Proteomes" id="UP000002524">
    <property type="component" value="Chromosome 1"/>
</dbReference>
<dbReference type="GO" id="GO:0005737">
    <property type="term" value="C:cytoplasm"/>
    <property type="evidence" value="ECO:0007669"/>
    <property type="project" value="UniProtKB-SubCell"/>
</dbReference>
<dbReference type="GO" id="GO:0004814">
    <property type="term" value="F:arginine-tRNA ligase activity"/>
    <property type="evidence" value="ECO:0000318"/>
    <property type="project" value="GO_Central"/>
</dbReference>
<dbReference type="GO" id="GO:0005524">
    <property type="term" value="F:ATP binding"/>
    <property type="evidence" value="ECO:0007669"/>
    <property type="project" value="UniProtKB-UniRule"/>
</dbReference>
<dbReference type="GO" id="GO:0006420">
    <property type="term" value="P:arginyl-tRNA aminoacylation"/>
    <property type="evidence" value="ECO:0000318"/>
    <property type="project" value="GO_Central"/>
</dbReference>
<dbReference type="CDD" id="cd07956">
    <property type="entry name" value="Anticodon_Ia_Arg"/>
    <property type="match status" value="1"/>
</dbReference>
<dbReference type="CDD" id="cd00671">
    <property type="entry name" value="ArgRS_core"/>
    <property type="match status" value="1"/>
</dbReference>
<dbReference type="FunFam" id="3.40.50.620:FF:000190">
    <property type="entry name" value="Arginine--tRNA ligase"/>
    <property type="match status" value="1"/>
</dbReference>
<dbReference type="Gene3D" id="3.30.1360.70">
    <property type="entry name" value="Arginyl tRNA synthetase N-terminal domain"/>
    <property type="match status" value="1"/>
</dbReference>
<dbReference type="Gene3D" id="3.40.50.620">
    <property type="entry name" value="HUPs"/>
    <property type="match status" value="1"/>
</dbReference>
<dbReference type="Gene3D" id="1.10.730.10">
    <property type="entry name" value="Isoleucyl-tRNA Synthetase, Domain 1"/>
    <property type="match status" value="1"/>
</dbReference>
<dbReference type="HAMAP" id="MF_00123">
    <property type="entry name" value="Arg_tRNA_synth"/>
    <property type="match status" value="1"/>
</dbReference>
<dbReference type="InterPro" id="IPR001412">
    <property type="entry name" value="aa-tRNA-synth_I_CS"/>
</dbReference>
<dbReference type="InterPro" id="IPR001278">
    <property type="entry name" value="Arg-tRNA-ligase"/>
</dbReference>
<dbReference type="InterPro" id="IPR005148">
    <property type="entry name" value="Arg-tRNA-synth_N"/>
</dbReference>
<dbReference type="InterPro" id="IPR036695">
    <property type="entry name" value="Arg-tRNA-synth_N_sf"/>
</dbReference>
<dbReference type="InterPro" id="IPR035684">
    <property type="entry name" value="ArgRS_core"/>
</dbReference>
<dbReference type="InterPro" id="IPR008909">
    <property type="entry name" value="DALR_anticod-bd"/>
</dbReference>
<dbReference type="InterPro" id="IPR014729">
    <property type="entry name" value="Rossmann-like_a/b/a_fold"/>
</dbReference>
<dbReference type="InterPro" id="IPR009080">
    <property type="entry name" value="tRNAsynth_Ia_anticodon-bd"/>
</dbReference>
<dbReference type="NCBIfam" id="NF002447">
    <property type="entry name" value="PRK01611.3-4"/>
    <property type="match status" value="1"/>
</dbReference>
<dbReference type="PANTHER" id="PTHR11956:SF5">
    <property type="entry name" value="ARGININE--TRNA LIGASE, CYTOPLASMIC"/>
    <property type="match status" value="1"/>
</dbReference>
<dbReference type="PANTHER" id="PTHR11956">
    <property type="entry name" value="ARGINYL-TRNA SYNTHETASE"/>
    <property type="match status" value="1"/>
</dbReference>
<dbReference type="Pfam" id="PF03485">
    <property type="entry name" value="Arg_tRNA_synt_N"/>
    <property type="match status" value="1"/>
</dbReference>
<dbReference type="Pfam" id="PF05746">
    <property type="entry name" value="DALR_1"/>
    <property type="match status" value="1"/>
</dbReference>
<dbReference type="Pfam" id="PF00750">
    <property type="entry name" value="tRNA-synt_1d"/>
    <property type="match status" value="2"/>
</dbReference>
<dbReference type="PRINTS" id="PR01038">
    <property type="entry name" value="TRNASYNTHARG"/>
</dbReference>
<dbReference type="SMART" id="SM01016">
    <property type="entry name" value="Arg_tRNA_synt_N"/>
    <property type="match status" value="1"/>
</dbReference>
<dbReference type="SMART" id="SM00836">
    <property type="entry name" value="DALR_1"/>
    <property type="match status" value="1"/>
</dbReference>
<dbReference type="SUPFAM" id="SSF47323">
    <property type="entry name" value="Anticodon-binding domain of a subclass of class I aminoacyl-tRNA synthetases"/>
    <property type="match status" value="1"/>
</dbReference>
<dbReference type="SUPFAM" id="SSF55190">
    <property type="entry name" value="Arginyl-tRNA synthetase (ArgRS), N-terminal 'additional' domain"/>
    <property type="match status" value="1"/>
</dbReference>
<dbReference type="SUPFAM" id="SSF52374">
    <property type="entry name" value="Nucleotidylyl transferase"/>
    <property type="match status" value="1"/>
</dbReference>
<dbReference type="PROSITE" id="PS00178">
    <property type="entry name" value="AA_TRNA_LIGASE_I"/>
    <property type="match status" value="1"/>
</dbReference>
<name>SYR_DEIRA</name>
<feature type="chain" id="PRO_0000151556" description="Arginine--tRNA ligase">
    <location>
        <begin position="1"/>
        <end position="609"/>
    </location>
</feature>
<feature type="short sequence motif" description="'HIGH' region">
    <location>
        <begin position="114"/>
        <end position="124"/>
    </location>
</feature>
<protein>
    <recommendedName>
        <fullName evidence="1">Arginine--tRNA ligase</fullName>
        <ecNumber evidence="1">6.1.1.19</ecNumber>
    </recommendedName>
    <alternativeName>
        <fullName evidence="1">Arginyl-tRNA synthetase</fullName>
        <shortName evidence="1">ArgRS</shortName>
    </alternativeName>
</protein>